<feature type="initiator methionine" description="Removed" evidence="3">
    <location>
        <position position="1"/>
    </location>
</feature>
<feature type="chain" id="PRO_0000129529" description="Large ribosomal subunit protein uL2">
    <location>
        <begin position="2"/>
        <end position="277"/>
    </location>
</feature>
<feature type="region of interest" description="Disordered" evidence="2">
    <location>
        <begin position="219"/>
        <end position="277"/>
    </location>
</feature>
<feature type="compositionally biased region" description="Basic residues" evidence="2">
    <location>
        <begin position="258"/>
        <end position="277"/>
    </location>
</feature>
<feature type="sequence conflict" description="In Ref. 1; AAC45959 and 2; BAA08834." evidence="5" ref="1 2">
    <original>T</original>
    <variation>S</variation>
    <location>
        <position position="9"/>
    </location>
</feature>
<feature type="sequence conflict" description="In Ref. 1; AAC45959." evidence="5" ref="1">
    <original>I</original>
    <variation>V</variation>
    <location>
        <position position="116"/>
    </location>
</feature>
<feature type="sequence conflict" description="In Ref. 2; BAA08834." evidence="5" ref="2">
    <original>G</original>
    <variation>E</variation>
    <location>
        <position position="256"/>
    </location>
</feature>
<feature type="sequence conflict" description="In Ref. 2; BAA08834." evidence="5" ref="2">
    <original>K</original>
    <variation>Q</variation>
    <location>
        <position position="262"/>
    </location>
</feature>
<feature type="strand" evidence="16">
    <location>
        <begin position="3"/>
        <end position="5"/>
    </location>
</feature>
<feature type="turn" evidence="16">
    <location>
        <begin position="11"/>
        <end position="15"/>
    </location>
</feature>
<feature type="strand" evidence="16">
    <location>
        <begin position="17"/>
        <end position="19"/>
    </location>
</feature>
<feature type="helix" evidence="16">
    <location>
        <begin position="31"/>
        <end position="33"/>
    </location>
</feature>
<feature type="strand" evidence="11">
    <location>
        <begin position="34"/>
        <end position="36"/>
    </location>
</feature>
<feature type="strand" evidence="10">
    <location>
        <begin position="41"/>
        <end position="43"/>
    </location>
</feature>
<feature type="strand" evidence="9">
    <location>
        <begin position="45"/>
        <end position="47"/>
    </location>
</feature>
<feature type="strand" evidence="16">
    <location>
        <begin position="51"/>
        <end position="54"/>
    </location>
</feature>
<feature type="strand" evidence="11">
    <location>
        <begin position="61"/>
        <end position="63"/>
    </location>
</feature>
<feature type="strand" evidence="16">
    <location>
        <begin position="76"/>
        <end position="82"/>
    </location>
</feature>
<feature type="strand" evidence="16">
    <location>
        <begin position="87"/>
        <end position="89"/>
    </location>
</feature>
<feature type="strand" evidence="16">
    <location>
        <begin position="91"/>
        <end position="96"/>
    </location>
</feature>
<feature type="strand" evidence="15">
    <location>
        <begin position="97"/>
        <end position="99"/>
    </location>
</feature>
<feature type="strand" evidence="16">
    <location>
        <begin position="101"/>
        <end position="105"/>
    </location>
</feature>
<feature type="strand" evidence="12">
    <location>
        <begin position="107"/>
        <end position="109"/>
    </location>
</feature>
<feature type="strand" evidence="15">
    <location>
        <begin position="118"/>
        <end position="121"/>
    </location>
</feature>
<feature type="strand" evidence="16">
    <location>
        <begin position="129"/>
        <end position="131"/>
    </location>
</feature>
<feature type="turn" evidence="16">
    <location>
        <begin position="132"/>
        <end position="134"/>
    </location>
</feature>
<feature type="strand" evidence="16">
    <location>
        <begin position="140"/>
        <end position="144"/>
    </location>
</feature>
<feature type="strand" evidence="8">
    <location>
        <begin position="145"/>
        <end position="147"/>
    </location>
</feature>
<feature type="turn" evidence="16">
    <location>
        <begin position="148"/>
        <end position="150"/>
    </location>
</feature>
<feature type="strand" evidence="14">
    <location>
        <begin position="157"/>
        <end position="159"/>
    </location>
</feature>
<feature type="strand" evidence="16">
    <location>
        <begin position="162"/>
        <end position="168"/>
    </location>
</feature>
<feature type="strand" evidence="16">
    <location>
        <begin position="171"/>
        <end position="175"/>
    </location>
</feature>
<feature type="turn" evidence="12">
    <location>
        <begin position="177"/>
        <end position="179"/>
    </location>
</feature>
<feature type="strand" evidence="16">
    <location>
        <begin position="181"/>
        <end position="185"/>
    </location>
</feature>
<feature type="strand" evidence="16">
    <location>
        <begin position="188"/>
        <end position="193"/>
    </location>
</feature>
<feature type="helix" evidence="16">
    <location>
        <begin position="198"/>
        <end position="202"/>
    </location>
</feature>
<feature type="helix" evidence="16">
    <location>
        <begin position="208"/>
        <end position="213"/>
    </location>
</feature>
<feature type="helix" evidence="16">
    <location>
        <begin position="222"/>
        <end position="224"/>
    </location>
</feature>
<feature type="turn" evidence="16">
    <location>
        <begin position="227"/>
        <end position="229"/>
    </location>
</feature>
<feature type="strand" evidence="16">
    <location>
        <begin position="236"/>
        <end position="238"/>
    </location>
</feature>
<feature type="strand" evidence="16">
    <location>
        <begin position="243"/>
        <end position="245"/>
    </location>
</feature>
<feature type="strand" evidence="11">
    <location>
        <begin position="249"/>
        <end position="251"/>
    </location>
</feature>
<feature type="strand" evidence="13">
    <location>
        <begin position="255"/>
        <end position="257"/>
    </location>
</feature>
<feature type="helix" evidence="16">
    <location>
        <begin position="265"/>
        <end position="268"/>
    </location>
</feature>
<feature type="strand" evidence="16">
    <location>
        <begin position="270"/>
        <end position="272"/>
    </location>
</feature>
<proteinExistence type="evidence at protein level"/>
<name>RL2_BACSU</name>
<gene>
    <name evidence="1" type="primary">rplB</name>
    <name type="ordered locus">BSU01190</name>
</gene>
<dbReference type="EMBL" id="U43929">
    <property type="protein sequence ID" value="AAC45959.1"/>
    <property type="molecule type" value="Genomic_DNA"/>
</dbReference>
<dbReference type="EMBL" id="D50302">
    <property type="protein sequence ID" value="BAA08834.1"/>
    <property type="molecule type" value="Genomic_DNA"/>
</dbReference>
<dbReference type="EMBL" id="AL009126">
    <property type="protein sequence ID" value="CAB11895.2"/>
    <property type="molecule type" value="Genomic_DNA"/>
</dbReference>
<dbReference type="PIR" id="F69694">
    <property type="entry name" value="F69694"/>
</dbReference>
<dbReference type="RefSeq" id="NP_388000.2">
    <property type="nucleotide sequence ID" value="NC_000964.3"/>
</dbReference>
<dbReference type="RefSeq" id="WP_003225795.1">
    <property type="nucleotide sequence ID" value="NZ_OZ025638.1"/>
</dbReference>
<dbReference type="PDB" id="3J3V">
    <property type="method" value="EM"/>
    <property type="resolution" value="13.30 A"/>
    <property type="chains" value="C=1-277"/>
</dbReference>
<dbReference type="PDB" id="3J3W">
    <property type="method" value="EM"/>
    <property type="resolution" value="10.70 A"/>
    <property type="chains" value="C=1-277"/>
</dbReference>
<dbReference type="PDB" id="3J9W">
    <property type="method" value="EM"/>
    <property type="resolution" value="3.90 A"/>
    <property type="chains" value="BD=1-277"/>
</dbReference>
<dbReference type="PDB" id="5NJT">
    <property type="method" value="EM"/>
    <property type="resolution" value="3.80 A"/>
    <property type="chains" value="W=2-276"/>
</dbReference>
<dbReference type="PDB" id="6HA1">
    <property type="method" value="EM"/>
    <property type="resolution" value="3.10 A"/>
    <property type="chains" value="C=1-277"/>
</dbReference>
<dbReference type="PDB" id="6HA8">
    <property type="method" value="EM"/>
    <property type="resolution" value="3.50 A"/>
    <property type="chains" value="C=1-277"/>
</dbReference>
<dbReference type="PDB" id="6HTQ">
    <property type="method" value="EM"/>
    <property type="resolution" value="4.50 A"/>
    <property type="chains" value="C=2-273"/>
</dbReference>
<dbReference type="PDB" id="6PPF">
    <property type="method" value="EM"/>
    <property type="resolution" value="3.40 A"/>
    <property type="chains" value="C=1-277"/>
</dbReference>
<dbReference type="PDB" id="6PPK">
    <property type="method" value="EM"/>
    <property type="resolution" value="4.40 A"/>
    <property type="chains" value="C=1-277"/>
</dbReference>
<dbReference type="PDB" id="6PVK">
    <property type="method" value="EM"/>
    <property type="resolution" value="3.40 A"/>
    <property type="chains" value="C=1-277"/>
</dbReference>
<dbReference type="PDB" id="6TNN">
    <property type="method" value="EM"/>
    <property type="resolution" value="3.07 A"/>
    <property type="chains" value="W=1-277"/>
</dbReference>
<dbReference type="PDB" id="6TPQ">
    <property type="method" value="EM"/>
    <property type="resolution" value="3.07 A"/>
    <property type="chains" value="W=1-277"/>
</dbReference>
<dbReference type="PDB" id="7AQC">
    <property type="method" value="EM"/>
    <property type="resolution" value="2.99 A"/>
    <property type="chains" value="C=1-277"/>
</dbReference>
<dbReference type="PDB" id="7AQD">
    <property type="method" value="EM"/>
    <property type="resolution" value="3.10 A"/>
    <property type="chains" value="C=1-277"/>
</dbReference>
<dbReference type="PDB" id="7AS8">
    <property type="method" value="EM"/>
    <property type="resolution" value="2.90 A"/>
    <property type="chains" value="E=1-277"/>
</dbReference>
<dbReference type="PDB" id="7AS9">
    <property type="method" value="EM"/>
    <property type="resolution" value="3.50 A"/>
    <property type="chains" value="E=1-277"/>
</dbReference>
<dbReference type="PDB" id="7O5B">
    <property type="method" value="EM"/>
    <property type="resolution" value="3.33 A"/>
    <property type="chains" value="Z=1-277"/>
</dbReference>
<dbReference type="PDB" id="7OPE">
    <property type="method" value="EM"/>
    <property type="resolution" value="3.20 A"/>
    <property type="chains" value="E=1-277"/>
</dbReference>
<dbReference type="PDB" id="7QGU">
    <property type="method" value="EM"/>
    <property type="resolution" value="4.75 A"/>
    <property type="chains" value="C=1-277"/>
</dbReference>
<dbReference type="PDB" id="7QH4">
    <property type="method" value="EM"/>
    <property type="resolution" value="5.45 A"/>
    <property type="chains" value="C=1-277"/>
</dbReference>
<dbReference type="PDB" id="7QV1">
    <property type="method" value="EM"/>
    <property type="resolution" value="3.50 A"/>
    <property type="chains" value="C=1-277"/>
</dbReference>
<dbReference type="PDB" id="7QV2">
    <property type="method" value="EM"/>
    <property type="resolution" value="3.50 A"/>
    <property type="chains" value="C=1-277"/>
</dbReference>
<dbReference type="PDB" id="7QV3">
    <property type="method" value="EM"/>
    <property type="resolution" value="5.14 A"/>
    <property type="chains" value="C=1-277"/>
</dbReference>
<dbReference type="PDB" id="7S9U">
    <property type="method" value="EM"/>
    <property type="resolution" value="3.20 A"/>
    <property type="chains" value="C=1-277"/>
</dbReference>
<dbReference type="PDB" id="7SAE">
    <property type="method" value="EM"/>
    <property type="resolution" value="3.00 A"/>
    <property type="chains" value="C=1-277"/>
</dbReference>
<dbReference type="PDB" id="8BUU">
    <property type="method" value="EM"/>
    <property type="resolution" value="2.90 A"/>
    <property type="chains" value="C=1-277"/>
</dbReference>
<dbReference type="PDB" id="8QCQ">
    <property type="method" value="EM"/>
    <property type="resolution" value="2.30 A"/>
    <property type="chains" value="C=1-277"/>
</dbReference>
<dbReference type="PDB" id="8QPP">
    <property type="method" value="EM"/>
    <property type="resolution" value="3.40 A"/>
    <property type="chains" value="Z=2-276"/>
</dbReference>
<dbReference type="PDB" id="8R55">
    <property type="method" value="EM"/>
    <property type="resolution" value="3.57 A"/>
    <property type="chains" value="Z=2-276"/>
</dbReference>
<dbReference type="PDB" id="8S1P">
    <property type="method" value="EM"/>
    <property type="resolution" value="1.96 A"/>
    <property type="chains" value="C=1-277"/>
</dbReference>
<dbReference type="PDB" id="8S1U">
    <property type="method" value="EM"/>
    <property type="resolution" value="3.40 A"/>
    <property type="chains" value="C=1-277"/>
</dbReference>
<dbReference type="PDB" id="9BS0">
    <property type="method" value="EM"/>
    <property type="resolution" value="3.30 A"/>
    <property type="chains" value="C=1-277"/>
</dbReference>
<dbReference type="PDB" id="9BSL">
    <property type="method" value="EM"/>
    <property type="resolution" value="3.10 A"/>
    <property type="chains" value="C=1-277"/>
</dbReference>
<dbReference type="PDB" id="9BSS">
    <property type="method" value="EM"/>
    <property type="resolution" value="3.10 A"/>
    <property type="chains" value="C=1-277"/>
</dbReference>
<dbReference type="PDBsum" id="3J3V"/>
<dbReference type="PDBsum" id="3J3W"/>
<dbReference type="PDBsum" id="3J9W"/>
<dbReference type="PDBsum" id="5NJT"/>
<dbReference type="PDBsum" id="6HA1"/>
<dbReference type="PDBsum" id="6HA8"/>
<dbReference type="PDBsum" id="6HTQ"/>
<dbReference type="PDBsum" id="6PPF"/>
<dbReference type="PDBsum" id="6PPK"/>
<dbReference type="PDBsum" id="6PVK"/>
<dbReference type="PDBsum" id="6TNN"/>
<dbReference type="PDBsum" id="6TPQ"/>
<dbReference type="PDBsum" id="7AQC"/>
<dbReference type="PDBsum" id="7AQD"/>
<dbReference type="PDBsum" id="7AS8"/>
<dbReference type="PDBsum" id="7AS9"/>
<dbReference type="PDBsum" id="7O5B"/>
<dbReference type="PDBsum" id="7OPE"/>
<dbReference type="PDBsum" id="7QGU"/>
<dbReference type="PDBsum" id="7QH4"/>
<dbReference type="PDBsum" id="7QV1"/>
<dbReference type="PDBsum" id="7QV2"/>
<dbReference type="PDBsum" id="7QV3"/>
<dbReference type="PDBsum" id="7S9U"/>
<dbReference type="PDBsum" id="7SAE"/>
<dbReference type="PDBsum" id="8BUU"/>
<dbReference type="PDBsum" id="8QCQ"/>
<dbReference type="PDBsum" id="8QPP"/>
<dbReference type="PDBsum" id="8R55"/>
<dbReference type="PDBsum" id="8S1P"/>
<dbReference type="PDBsum" id="8S1U"/>
<dbReference type="PDBsum" id="9BS0"/>
<dbReference type="PDBsum" id="9BSL"/>
<dbReference type="PDBsum" id="9BSS"/>
<dbReference type="EMDB" id="EMD-0176"/>
<dbReference type="EMDB" id="EMD-0177"/>
<dbReference type="EMDB" id="EMD-0270"/>
<dbReference type="EMDB" id="EMD-10535"/>
<dbReference type="EMDB" id="EMD-10543"/>
<dbReference type="EMDB" id="EMD-11862"/>
<dbReference type="EMDB" id="EMD-11864"/>
<dbReference type="EMDB" id="EMD-11889"/>
<dbReference type="EMDB" id="EMD-11890"/>
<dbReference type="EMDB" id="EMD-12734"/>
<dbReference type="EMDB" id="EMD-13017"/>
<dbReference type="EMDB" id="EMD-14157"/>
<dbReference type="EMDB" id="EMD-14158"/>
<dbReference type="EMDB" id="EMD-14159"/>
<dbReference type="EMDB" id="EMD-16246"/>
<dbReference type="EMDB" id="EMD-18332"/>
<dbReference type="EMDB" id="EMD-19638"/>
<dbReference type="EMDB" id="EMD-19641"/>
<dbReference type="EMDB" id="EMD-3656"/>
<dbReference type="EMDB" id="EMD-44849"/>
<dbReference type="EMDB" id="EMD-44869"/>
<dbReference type="EMDB" id="EMD-44871"/>
<dbReference type="SMR" id="P42919"/>
<dbReference type="FunCoup" id="P42919">
    <property type="interactions" value="668"/>
</dbReference>
<dbReference type="IntAct" id="P42919">
    <property type="interactions" value="2"/>
</dbReference>
<dbReference type="MINT" id="P42919"/>
<dbReference type="STRING" id="224308.BSU01190"/>
<dbReference type="jPOST" id="P42919"/>
<dbReference type="PaxDb" id="224308-BSU01190"/>
<dbReference type="EnsemblBacteria" id="CAB11895">
    <property type="protein sequence ID" value="CAB11895"/>
    <property type="gene ID" value="BSU_01190"/>
</dbReference>
<dbReference type="GeneID" id="86875483"/>
<dbReference type="GeneID" id="936817"/>
<dbReference type="KEGG" id="bsu:BSU01190"/>
<dbReference type="PATRIC" id="fig|224308.179.peg.122"/>
<dbReference type="eggNOG" id="COG0090">
    <property type="taxonomic scope" value="Bacteria"/>
</dbReference>
<dbReference type="InParanoid" id="P42919"/>
<dbReference type="OrthoDB" id="9778722at2"/>
<dbReference type="PhylomeDB" id="P42919"/>
<dbReference type="BioCyc" id="BSUB:BSU01190-MONOMER"/>
<dbReference type="EvolutionaryTrace" id="P42919"/>
<dbReference type="PRO" id="PR:P42919"/>
<dbReference type="Proteomes" id="UP000001570">
    <property type="component" value="Chromosome"/>
</dbReference>
<dbReference type="GO" id="GO:0015934">
    <property type="term" value="C:large ribosomal subunit"/>
    <property type="evidence" value="ECO:0007669"/>
    <property type="project" value="InterPro"/>
</dbReference>
<dbReference type="GO" id="GO:0003723">
    <property type="term" value="F:RNA binding"/>
    <property type="evidence" value="ECO:0000318"/>
    <property type="project" value="GO_Central"/>
</dbReference>
<dbReference type="GO" id="GO:0019843">
    <property type="term" value="F:rRNA binding"/>
    <property type="evidence" value="ECO:0007669"/>
    <property type="project" value="UniProtKB-UniRule"/>
</dbReference>
<dbReference type="GO" id="GO:0003735">
    <property type="term" value="F:structural constituent of ribosome"/>
    <property type="evidence" value="ECO:0000318"/>
    <property type="project" value="GO_Central"/>
</dbReference>
<dbReference type="GO" id="GO:0016740">
    <property type="term" value="F:transferase activity"/>
    <property type="evidence" value="ECO:0007669"/>
    <property type="project" value="InterPro"/>
</dbReference>
<dbReference type="GO" id="GO:0002181">
    <property type="term" value="P:cytoplasmic translation"/>
    <property type="evidence" value="ECO:0000318"/>
    <property type="project" value="GO_Central"/>
</dbReference>
<dbReference type="FunFam" id="2.30.30.30:FF:000001">
    <property type="entry name" value="50S ribosomal protein L2"/>
    <property type="match status" value="1"/>
</dbReference>
<dbReference type="FunFam" id="2.40.50.140:FF:000003">
    <property type="entry name" value="50S ribosomal protein L2"/>
    <property type="match status" value="1"/>
</dbReference>
<dbReference type="FunFam" id="4.10.950.10:FF:000001">
    <property type="entry name" value="50S ribosomal protein L2"/>
    <property type="match status" value="1"/>
</dbReference>
<dbReference type="Gene3D" id="2.30.30.30">
    <property type="match status" value="1"/>
</dbReference>
<dbReference type="Gene3D" id="2.40.50.140">
    <property type="entry name" value="Nucleic acid-binding proteins"/>
    <property type="match status" value="1"/>
</dbReference>
<dbReference type="Gene3D" id="4.10.950.10">
    <property type="entry name" value="Ribosomal protein L2, domain 3"/>
    <property type="match status" value="1"/>
</dbReference>
<dbReference type="HAMAP" id="MF_01320_B">
    <property type="entry name" value="Ribosomal_uL2_B"/>
    <property type="match status" value="1"/>
</dbReference>
<dbReference type="InterPro" id="IPR012340">
    <property type="entry name" value="NA-bd_OB-fold"/>
</dbReference>
<dbReference type="InterPro" id="IPR014722">
    <property type="entry name" value="Rib_uL2_dom2"/>
</dbReference>
<dbReference type="InterPro" id="IPR002171">
    <property type="entry name" value="Ribosomal_uL2"/>
</dbReference>
<dbReference type="InterPro" id="IPR005880">
    <property type="entry name" value="Ribosomal_uL2_bac/org-type"/>
</dbReference>
<dbReference type="InterPro" id="IPR022669">
    <property type="entry name" value="Ribosomal_uL2_C"/>
</dbReference>
<dbReference type="InterPro" id="IPR022671">
    <property type="entry name" value="Ribosomal_uL2_CS"/>
</dbReference>
<dbReference type="InterPro" id="IPR014726">
    <property type="entry name" value="Ribosomal_uL2_dom3"/>
</dbReference>
<dbReference type="InterPro" id="IPR022666">
    <property type="entry name" value="Ribosomal_uL2_RNA-bd_dom"/>
</dbReference>
<dbReference type="InterPro" id="IPR008991">
    <property type="entry name" value="Translation_prot_SH3-like_sf"/>
</dbReference>
<dbReference type="NCBIfam" id="TIGR01171">
    <property type="entry name" value="rplB_bact"/>
    <property type="match status" value="1"/>
</dbReference>
<dbReference type="PANTHER" id="PTHR13691:SF5">
    <property type="entry name" value="LARGE RIBOSOMAL SUBUNIT PROTEIN UL2M"/>
    <property type="match status" value="1"/>
</dbReference>
<dbReference type="PANTHER" id="PTHR13691">
    <property type="entry name" value="RIBOSOMAL PROTEIN L2"/>
    <property type="match status" value="1"/>
</dbReference>
<dbReference type="Pfam" id="PF00181">
    <property type="entry name" value="Ribosomal_L2"/>
    <property type="match status" value="1"/>
</dbReference>
<dbReference type="Pfam" id="PF03947">
    <property type="entry name" value="Ribosomal_L2_C"/>
    <property type="match status" value="1"/>
</dbReference>
<dbReference type="PIRSF" id="PIRSF002158">
    <property type="entry name" value="Ribosomal_L2"/>
    <property type="match status" value="1"/>
</dbReference>
<dbReference type="SMART" id="SM01383">
    <property type="entry name" value="Ribosomal_L2"/>
    <property type="match status" value="1"/>
</dbReference>
<dbReference type="SMART" id="SM01382">
    <property type="entry name" value="Ribosomal_L2_C"/>
    <property type="match status" value="1"/>
</dbReference>
<dbReference type="SUPFAM" id="SSF50249">
    <property type="entry name" value="Nucleic acid-binding proteins"/>
    <property type="match status" value="1"/>
</dbReference>
<dbReference type="SUPFAM" id="SSF50104">
    <property type="entry name" value="Translation proteins SH3-like domain"/>
    <property type="match status" value="1"/>
</dbReference>
<dbReference type="PROSITE" id="PS00467">
    <property type="entry name" value="RIBOSOMAL_L2"/>
    <property type="match status" value="1"/>
</dbReference>
<sequence>MAIKKYKPTSNGRRGMTTSDFAEITTDKPEKSLLAPLHKKGGRNNQGKLTVRHQGGGHKRQYRVIDFKRDKDGIPGRVATVEYDPNRSANIALINYADGEKRYILAPKGIQVGTEIMSGPEADIKVGNALPLINIPVGTVVHNIELKPGKGGQLVRSAGTSAQVLGKEGKYVLVRLNSGEVRMILSACRASIGQVGNEQHELINIGKAGRSRWKGIRPTVRGSVMNPNDHPHGGGEGRAPIGRKSPMSPWGKPTLGFKTRKKKNKSDKFIVRRRKNK</sequence>
<accession>P42919</accession>
<comment type="function">
    <text evidence="1">One of the primary rRNA binding proteins. Required for association of the 30S and 50S subunits to form the 70S ribosome, for tRNA binding and peptide bond formation. It has been suggested to have peptidyltransferase activity; this is somewhat controversial. Makes several contacts with the 16S rRNA in the 70S ribosome.</text>
</comment>
<comment type="subunit">
    <text evidence="1 3 4">Part of the 50S ribosomal subunit (PubMed:10781545, PubMed:30126986). Forms a bridge to the 30S subunit in the 70S ribosome (By similarity).</text>
</comment>
<comment type="similarity">
    <text evidence="1">Belongs to the universal ribosomal protein uL2 family.</text>
</comment>
<reference key="1">
    <citation type="journal article" date="1997" name="J. Bacteriol.">
        <title>Analysis of the Bacillus subtilis S10 ribosomal protein gene cluster identifies two promoters that may be responsible for transcription of the entire 15-kilobase S10-spc-alpha cluster.</title>
        <authorList>
            <person name="Li X."/>
            <person name="Lindahl L."/>
            <person name="Sha Y."/>
            <person name="Zengel J.M."/>
        </authorList>
    </citation>
    <scope>NUCLEOTIDE SEQUENCE [GENOMIC DNA]</scope>
    <source>
        <strain>SG38</strain>
    </source>
</reference>
<reference key="2">
    <citation type="journal article" date="1996" name="Microbiology">
        <title>Sequence analysis of a 50 kb region between spo0H and rrnH on the Bacillus subtilis chromosome.</title>
        <authorList>
            <person name="Yasumoto K."/>
            <person name="Liu H."/>
            <person name="Jeong S.M."/>
            <person name="Ohashi Y."/>
            <person name="Kakinuma S."/>
            <person name="Tanaka K."/>
            <person name="Kawamura F."/>
            <person name="Yoshikawa H."/>
            <person name="Takahashi H."/>
        </authorList>
    </citation>
    <scope>NUCLEOTIDE SEQUENCE [GENOMIC DNA]</scope>
    <source>
        <strain>168</strain>
    </source>
</reference>
<reference key="3">
    <citation type="journal article" date="1997" name="Nature">
        <title>The complete genome sequence of the Gram-positive bacterium Bacillus subtilis.</title>
        <authorList>
            <person name="Kunst F."/>
            <person name="Ogasawara N."/>
            <person name="Moszer I."/>
            <person name="Albertini A.M."/>
            <person name="Alloni G."/>
            <person name="Azevedo V."/>
            <person name="Bertero M.G."/>
            <person name="Bessieres P."/>
            <person name="Bolotin A."/>
            <person name="Borchert S."/>
            <person name="Borriss R."/>
            <person name="Boursier L."/>
            <person name="Brans A."/>
            <person name="Braun M."/>
            <person name="Brignell S.C."/>
            <person name="Bron S."/>
            <person name="Brouillet S."/>
            <person name="Bruschi C.V."/>
            <person name="Caldwell B."/>
            <person name="Capuano V."/>
            <person name="Carter N.M."/>
            <person name="Choi S.-K."/>
            <person name="Codani J.-J."/>
            <person name="Connerton I.F."/>
            <person name="Cummings N.J."/>
            <person name="Daniel R.A."/>
            <person name="Denizot F."/>
            <person name="Devine K.M."/>
            <person name="Duesterhoeft A."/>
            <person name="Ehrlich S.D."/>
            <person name="Emmerson P.T."/>
            <person name="Entian K.-D."/>
            <person name="Errington J."/>
            <person name="Fabret C."/>
            <person name="Ferrari E."/>
            <person name="Foulger D."/>
            <person name="Fritz C."/>
            <person name="Fujita M."/>
            <person name="Fujita Y."/>
            <person name="Fuma S."/>
            <person name="Galizzi A."/>
            <person name="Galleron N."/>
            <person name="Ghim S.-Y."/>
            <person name="Glaser P."/>
            <person name="Goffeau A."/>
            <person name="Golightly E.J."/>
            <person name="Grandi G."/>
            <person name="Guiseppi G."/>
            <person name="Guy B.J."/>
            <person name="Haga K."/>
            <person name="Haiech J."/>
            <person name="Harwood C.R."/>
            <person name="Henaut A."/>
            <person name="Hilbert H."/>
            <person name="Holsappel S."/>
            <person name="Hosono S."/>
            <person name="Hullo M.-F."/>
            <person name="Itaya M."/>
            <person name="Jones L.-M."/>
            <person name="Joris B."/>
            <person name="Karamata D."/>
            <person name="Kasahara Y."/>
            <person name="Klaerr-Blanchard M."/>
            <person name="Klein C."/>
            <person name="Kobayashi Y."/>
            <person name="Koetter P."/>
            <person name="Koningstein G."/>
            <person name="Krogh S."/>
            <person name="Kumano M."/>
            <person name="Kurita K."/>
            <person name="Lapidus A."/>
            <person name="Lardinois S."/>
            <person name="Lauber J."/>
            <person name="Lazarevic V."/>
            <person name="Lee S.-M."/>
            <person name="Levine A."/>
            <person name="Liu H."/>
            <person name="Masuda S."/>
            <person name="Mauel C."/>
            <person name="Medigue C."/>
            <person name="Medina N."/>
            <person name="Mellado R.P."/>
            <person name="Mizuno M."/>
            <person name="Moestl D."/>
            <person name="Nakai S."/>
            <person name="Noback M."/>
            <person name="Noone D."/>
            <person name="O'Reilly M."/>
            <person name="Ogawa K."/>
            <person name="Ogiwara A."/>
            <person name="Oudega B."/>
            <person name="Park S.-H."/>
            <person name="Parro V."/>
            <person name="Pohl T.M."/>
            <person name="Portetelle D."/>
            <person name="Porwollik S."/>
            <person name="Prescott A.M."/>
            <person name="Presecan E."/>
            <person name="Pujic P."/>
            <person name="Purnelle B."/>
            <person name="Rapoport G."/>
            <person name="Rey M."/>
            <person name="Reynolds S."/>
            <person name="Rieger M."/>
            <person name="Rivolta C."/>
            <person name="Rocha E."/>
            <person name="Roche B."/>
            <person name="Rose M."/>
            <person name="Sadaie Y."/>
            <person name="Sato T."/>
            <person name="Scanlan E."/>
            <person name="Schleich S."/>
            <person name="Schroeter R."/>
            <person name="Scoffone F."/>
            <person name="Sekiguchi J."/>
            <person name="Sekowska A."/>
            <person name="Seror S.J."/>
            <person name="Serror P."/>
            <person name="Shin B.-S."/>
            <person name="Soldo B."/>
            <person name="Sorokin A."/>
            <person name="Tacconi E."/>
            <person name="Takagi T."/>
            <person name="Takahashi H."/>
            <person name="Takemaru K."/>
            <person name="Takeuchi M."/>
            <person name="Tamakoshi A."/>
            <person name="Tanaka T."/>
            <person name="Terpstra P."/>
            <person name="Tognoni A."/>
            <person name="Tosato V."/>
            <person name="Uchiyama S."/>
            <person name="Vandenbol M."/>
            <person name="Vannier F."/>
            <person name="Vassarotti A."/>
            <person name="Viari A."/>
            <person name="Wambutt R."/>
            <person name="Wedler E."/>
            <person name="Wedler H."/>
            <person name="Weitzenegger T."/>
            <person name="Winters P."/>
            <person name="Wipat A."/>
            <person name="Yamamoto H."/>
            <person name="Yamane K."/>
            <person name="Yasumoto K."/>
            <person name="Yata K."/>
            <person name="Yoshida K."/>
            <person name="Yoshikawa H.-F."/>
            <person name="Zumstein E."/>
            <person name="Yoshikawa H."/>
            <person name="Danchin A."/>
        </authorList>
    </citation>
    <scope>NUCLEOTIDE SEQUENCE [LARGE SCALE GENOMIC DNA]</scope>
    <source>
        <strain>168</strain>
    </source>
</reference>
<reference key="4">
    <citation type="journal article" date="2009" name="Microbiology">
        <title>From a consortium sequence to a unified sequence: the Bacillus subtilis 168 reference genome a decade later.</title>
        <authorList>
            <person name="Barbe V."/>
            <person name="Cruveiller S."/>
            <person name="Kunst F."/>
            <person name="Lenoble P."/>
            <person name="Meurice G."/>
            <person name="Sekowska A."/>
            <person name="Vallenet D."/>
            <person name="Wang T."/>
            <person name="Moszer I."/>
            <person name="Medigue C."/>
            <person name="Danchin A."/>
        </authorList>
    </citation>
    <scope>SEQUENCE REVISION TO 9; 256 AND 262</scope>
</reference>
<reference key="5">
    <citation type="journal article" date="2000" name="J. Bacteriol.">
        <title>The Bacillus subtilis GTP binding protein obg and regulators of the sigma(B) stress response transcription factor cofractionate with ribosomes.</title>
        <authorList>
            <person name="Scott J.M."/>
            <person name="Ju J."/>
            <person name="Mitchell T."/>
            <person name="Haldenwang W.G."/>
        </authorList>
    </citation>
    <scope>PROTEIN SEQUENCE OF 2-9</scope>
    <scope>SUBUNIT</scope>
    <source>
        <strain>PY22</strain>
    </source>
</reference>
<reference evidence="6 7" key="6">
    <citation type="journal article" date="2018" name="Proc. Natl. Acad. Sci. U.S.A.">
        <title>Structural basis for antibiotic resistance mediated by the Bacillus subtilis ABCF ATPase VmlR.</title>
        <authorList>
            <person name="Crowe-McAuliffe C."/>
            <person name="Graf M."/>
            <person name="Huter P."/>
            <person name="Takada H."/>
            <person name="Abdelshahid M."/>
            <person name="Novacek J."/>
            <person name="Murina V."/>
            <person name="Atkinson G.C."/>
            <person name="Hauryliuk V."/>
            <person name="Wilson D.N."/>
        </authorList>
    </citation>
    <scope>STRUCTURE BY ELECTRON MICROSCOPY (3.10 ANGSTROMS) OF 1-277 WITH AND WITHOUT VIRGINIAMYCIN M</scope>
</reference>
<evidence type="ECO:0000255" key="1">
    <source>
        <dbReference type="HAMAP-Rule" id="MF_01320"/>
    </source>
</evidence>
<evidence type="ECO:0000256" key="2">
    <source>
        <dbReference type="SAM" id="MobiDB-lite"/>
    </source>
</evidence>
<evidence type="ECO:0000269" key="3">
    <source>
    </source>
</evidence>
<evidence type="ECO:0000269" key="4">
    <source>
    </source>
</evidence>
<evidence type="ECO:0000305" key="5"/>
<evidence type="ECO:0007744" key="6">
    <source>
        <dbReference type="PDB" id="6HA1"/>
    </source>
</evidence>
<evidence type="ECO:0007744" key="7">
    <source>
        <dbReference type="PDB" id="6HA8"/>
    </source>
</evidence>
<evidence type="ECO:0007829" key="8">
    <source>
        <dbReference type="PDB" id="6PPF"/>
    </source>
</evidence>
<evidence type="ECO:0007829" key="9">
    <source>
        <dbReference type="PDB" id="6PVK"/>
    </source>
</evidence>
<evidence type="ECO:0007829" key="10">
    <source>
        <dbReference type="PDB" id="6TNN"/>
    </source>
</evidence>
<evidence type="ECO:0007829" key="11">
    <source>
        <dbReference type="PDB" id="7AQC"/>
    </source>
</evidence>
<evidence type="ECO:0007829" key="12">
    <source>
        <dbReference type="PDB" id="7AS8"/>
    </source>
</evidence>
<evidence type="ECO:0007829" key="13">
    <source>
        <dbReference type="PDB" id="7AS9"/>
    </source>
</evidence>
<evidence type="ECO:0007829" key="14">
    <source>
        <dbReference type="PDB" id="7S9U"/>
    </source>
</evidence>
<evidence type="ECO:0007829" key="15">
    <source>
        <dbReference type="PDB" id="7SAE"/>
    </source>
</evidence>
<evidence type="ECO:0007829" key="16">
    <source>
        <dbReference type="PDB" id="8S1P"/>
    </source>
</evidence>
<keyword id="KW-0002">3D-structure</keyword>
<keyword id="KW-0903">Direct protein sequencing</keyword>
<keyword id="KW-1185">Reference proteome</keyword>
<keyword id="KW-0687">Ribonucleoprotein</keyword>
<keyword id="KW-0689">Ribosomal protein</keyword>
<keyword id="KW-0694">RNA-binding</keyword>
<keyword id="KW-0699">rRNA-binding</keyword>
<protein>
    <recommendedName>
        <fullName evidence="1">Large ribosomal subunit protein uL2</fullName>
    </recommendedName>
    <alternativeName>
        <fullName evidence="5">50S ribosomal protein L2</fullName>
        <shortName>BL2</shortName>
    </alternativeName>
</protein>
<organism>
    <name type="scientific">Bacillus subtilis (strain 168)</name>
    <dbReference type="NCBI Taxonomy" id="224308"/>
    <lineage>
        <taxon>Bacteria</taxon>
        <taxon>Bacillati</taxon>
        <taxon>Bacillota</taxon>
        <taxon>Bacilli</taxon>
        <taxon>Bacillales</taxon>
        <taxon>Bacillaceae</taxon>
        <taxon>Bacillus</taxon>
    </lineage>
</organism>